<dbReference type="EMBL" id="X15907">
    <property type="protein sequence ID" value="CAA34021.1"/>
    <property type="molecule type" value="Genomic_DNA"/>
</dbReference>
<dbReference type="EMBL" id="AF158101">
    <property type="protein sequence ID" value="AAD42505.1"/>
    <property type="molecule type" value="Genomic_DNA"/>
</dbReference>
<dbReference type="PIR" id="JQ0656">
    <property type="entry name" value="G6BPT4"/>
</dbReference>
<dbReference type="RefSeq" id="NP_049764.1">
    <property type="nucleotide sequence ID" value="NC_000866.4"/>
</dbReference>
<dbReference type="PDB" id="3H2T">
    <property type="method" value="X-ray"/>
    <property type="resolution" value="3.20 A"/>
    <property type="chains" value="A/B=334-660"/>
</dbReference>
<dbReference type="PDB" id="3H3W">
    <property type="method" value="EM"/>
    <property type="resolution" value="12.00 A"/>
    <property type="chains" value="A/B/C/D/E/F/G/H/I/J/K/L=334-660"/>
</dbReference>
<dbReference type="PDB" id="3H3Y">
    <property type="method" value="EM"/>
    <property type="resolution" value="16.00 A"/>
    <property type="chains" value="A/B/C/D/E/F/G/H/I/J/K/L=334-660"/>
</dbReference>
<dbReference type="PDB" id="5HX2">
    <property type="method" value="EM"/>
    <property type="resolution" value="3.80 A"/>
    <property type="chains" value="D/E=1-660"/>
</dbReference>
<dbReference type="PDB" id="5IV5">
    <property type="method" value="EM"/>
    <property type="resolution" value="4.11 A"/>
    <property type="chains" value="A/B/BH/BI/EA/EB/GD/GE/X/Y/u/v=1-660"/>
</dbReference>
<dbReference type="PDB" id="5IV7">
    <property type="method" value="EM"/>
    <property type="resolution" value="6.77 A"/>
    <property type="chains" value="A/B/BF/BG/EA/EB/Q/R/g/h/w/x=1-660"/>
</dbReference>
<dbReference type="PDBsum" id="3H2T"/>
<dbReference type="PDBsum" id="3H3W"/>
<dbReference type="PDBsum" id="3H3Y"/>
<dbReference type="PDBsum" id="5HX2"/>
<dbReference type="PDBsum" id="5IV5"/>
<dbReference type="PDBsum" id="5IV7"/>
<dbReference type="EMDB" id="EMD-8064"/>
<dbReference type="SMR" id="P19060"/>
<dbReference type="DIP" id="DIP-48306N"/>
<dbReference type="TCDB" id="1.K.1.1.1">
    <property type="family name" value="the gp27/5 t4-baseplate (t4-bp) family"/>
</dbReference>
<dbReference type="GeneID" id="1258662"/>
<dbReference type="KEGG" id="vg:1258662"/>
<dbReference type="OrthoDB" id="668at10239"/>
<dbReference type="EvolutionaryTrace" id="P19060"/>
<dbReference type="Proteomes" id="UP000009087">
    <property type="component" value="Segment"/>
</dbReference>
<dbReference type="GO" id="GO:0098025">
    <property type="term" value="C:virus tail, baseplate"/>
    <property type="evidence" value="ECO:0000314"/>
    <property type="project" value="UniProtKB"/>
</dbReference>
<dbReference type="GO" id="GO:0042802">
    <property type="term" value="F:identical protein binding"/>
    <property type="evidence" value="ECO:0000353"/>
    <property type="project" value="IntAct"/>
</dbReference>
<dbReference type="GO" id="GO:0098003">
    <property type="term" value="P:viral tail assembly"/>
    <property type="evidence" value="ECO:0007669"/>
    <property type="project" value="UniProtKB-KW"/>
</dbReference>
<dbReference type="Gene3D" id="3.30.300.200">
    <property type="match status" value="1"/>
</dbReference>
<dbReference type="HAMAP" id="MF_04102">
    <property type="entry name" value="BP06_T4"/>
    <property type="match status" value="1"/>
</dbReference>
<dbReference type="InterPro" id="IPR049026">
    <property type="entry name" value="Gp6-like_N"/>
</dbReference>
<dbReference type="InterPro" id="IPR049027">
    <property type="entry name" value="Gp6_C-I"/>
</dbReference>
<dbReference type="InterPro" id="IPR049028">
    <property type="entry name" value="gp6_C-II"/>
</dbReference>
<dbReference type="InterPro" id="IPR054065">
    <property type="entry name" value="Gp6_C-III"/>
</dbReference>
<dbReference type="InterPro" id="IPR049029">
    <property type="entry name" value="Gp6_II_1st"/>
</dbReference>
<dbReference type="InterPro" id="IPR034698">
    <property type="entry name" value="GP6_T4"/>
</dbReference>
<dbReference type="Pfam" id="PF21379">
    <property type="entry name" value="Gp6-like_1st"/>
    <property type="match status" value="1"/>
</dbReference>
<dbReference type="Pfam" id="PF21515">
    <property type="entry name" value="Gp6_2nd"/>
    <property type="match status" value="1"/>
</dbReference>
<dbReference type="Pfam" id="PF21472">
    <property type="entry name" value="gp6_C-domII"/>
    <property type="match status" value="1"/>
</dbReference>
<dbReference type="Pfam" id="PF21387">
    <property type="entry name" value="Gp6_C-I"/>
    <property type="match status" value="1"/>
</dbReference>
<dbReference type="Pfam" id="PF21871">
    <property type="entry name" value="Gp6_C-III"/>
    <property type="match status" value="1"/>
</dbReference>
<organismHost>
    <name type="scientific">Escherichia coli</name>
    <dbReference type="NCBI Taxonomy" id="562"/>
</organismHost>
<accession>P19060</accession>
<sequence>MANTPVNYQLTRTANAIPEIFVGGTFAEIKQNLIEWLNGQNEFLDYDFEGSRLNVLCDLLAYNTLYIQQFGNAAVYESFMRTANLRSSVVQAAQDNGYLPTSKSAAQTEIMLTCTDALNRNYITIPRGTRFLAYAKDTSVNPYNFVSREDVIAIRDKNNQYFPRLKLAQGRIVRTEIIYDKLTPIIIYDKNIDRNQVKLYVDGAEWINWTRKSMVHAGSTSTIYYMRETIDGNTEFYFGEGEISVNASEGALTANYIGGLKPTQNSTIVIEYISTNGADANGAVGFSYADTLTNITVININENPNDDPDFVGADGGGDPEDIERIRELGTIKRETQQRCVTATDYDTFVSERFGSIIQAVQTFTDSTKPGYAFIAAKPKSGLYLTTVQREDIKNYLKDYNLAPITPSIISPNYLFIKTNLKVTYALNKLQESEQWLEGQIIDKIDRYYTEDVEIFNSSFAKSKMLTYVDDADHSVIGSSATIQMVREVQNFYKTPEAGIKYNNQIKDRSMESNTFSFNSGRKVVNPDTGLEEDVLYDVRIVSTDRDSKGIGKVIIGPFASGDVTENENIQPYTGNDFNKLANSDGRDKYYVIGEINYPADVIYWNIAKINLTSEKFEVQTIELYSDPTDDVIFTRDGSLIVFENDLRPQYLTIDLEPISQ</sequence>
<keyword id="KW-0002">3D-structure</keyword>
<keyword id="KW-1185">Reference proteome</keyword>
<keyword id="KW-1226">Viral baseplate protein</keyword>
<keyword id="KW-1188">Viral release from host cell</keyword>
<keyword id="KW-1245">Viral tail assembly</keyword>
<keyword id="KW-1227">Viral tail protein</keyword>
<keyword id="KW-0946">Virion</keyword>
<evidence type="ECO:0000255" key="1">
    <source>
        <dbReference type="HAMAP-Rule" id="MF_04102"/>
    </source>
</evidence>
<evidence type="ECO:0000269" key="2">
    <source>
    </source>
</evidence>
<evidence type="ECO:0000269" key="3">
    <source>
    </source>
</evidence>
<evidence type="ECO:0000269" key="4">
    <source>
    </source>
</evidence>
<evidence type="ECO:0000269" key="5">
    <source>
    </source>
</evidence>
<evidence type="ECO:0000303" key="6">
    <source>
    </source>
</evidence>
<evidence type="ECO:0000305" key="7"/>
<evidence type="ECO:0007744" key="8">
    <source>
        <dbReference type="PDB" id="3H2T"/>
    </source>
</evidence>
<evidence type="ECO:0007744" key="9">
    <source>
        <dbReference type="PDB" id="3H3W"/>
    </source>
</evidence>
<evidence type="ECO:0007744" key="10">
    <source>
        <dbReference type="PDB" id="3H3Y"/>
    </source>
</evidence>
<evidence type="ECO:0007744" key="11">
    <source>
        <dbReference type="PDB" id="5IV5"/>
    </source>
</evidence>
<evidence type="ECO:0007744" key="12">
    <source>
        <dbReference type="PDB" id="5IV7"/>
    </source>
</evidence>
<evidence type="ECO:0007829" key="13">
    <source>
        <dbReference type="PDB" id="3H2T"/>
    </source>
</evidence>
<organism>
    <name type="scientific">Enterobacteria phage T4</name>
    <name type="common">Bacteriophage T4</name>
    <dbReference type="NCBI Taxonomy" id="10665"/>
    <lineage>
        <taxon>Viruses</taxon>
        <taxon>Duplodnaviria</taxon>
        <taxon>Heunggongvirae</taxon>
        <taxon>Uroviricota</taxon>
        <taxon>Caudoviricetes</taxon>
        <taxon>Straboviridae</taxon>
        <taxon>Tevenvirinae</taxon>
        <taxon>Tequatrovirus</taxon>
    </lineage>
</organism>
<name>BP06_BPT4</name>
<comment type="function">
    <text evidence="2 5 6">Baseplate protein that is located next to the tail tube (inner baseplate) (PubMed:27193680). Involved in the tail assembly (PubMed:21129200). The gp25-(gp6)2-gp7 module is involved in sheath contraction (PubMed:27193680).</text>
</comment>
<comment type="subunit">
    <text evidence="3 4 5">Homodimer (PubMed:2403438, PubMed:19896486, PubMed:27193680); each gp6 molecule in the ring interacts with its two neighbors, forming an N-terminal dimer with one and a C-terminal dimer with the other (PubMed:27193680). Heterotrimer with gp7; gp6 is part of a (gp6)2-gp7 heterotrimeric molecule (PubMed:27193680). The (gp6)2-gp7 heterotrimeric molecule further interacts with gp25 and gp53; the gp25-(gp6)2-gp7 module is involved in sheath contraction (PubMed:27193680). Part of the baseplate macromolecular complex which consists of gp5, gp5.4, gp27 (central spike complex); gp6, gp25, gp53 (inner baseplate); gp7, gp8 (intermediate baseplate); gp9, gp10, gp11, gp12 (peripheral); gp48 and gp54 (proximal region of the tail tube) (PubMed:27193680).</text>
</comment>
<comment type="interaction">
    <interactant intactId="EBI-15787824">
        <id>P19060</id>
    </interactant>
    <interactant intactId="EBI-15787824">
        <id>P19060</id>
        <label>6</label>
    </interactant>
    <organismsDiffer>false</organismsDiffer>
    <experiments>3</experiments>
</comment>
<comment type="subcellular location">
    <subcellularLocation>
        <location evidence="1 2 4 5">Virion</location>
    </subcellularLocation>
    <text evidence="1 5">12 copies of gp6 form a continuous ring that makes up most of the inner baseplate.</text>
</comment>
<comment type="induction">
    <text evidence="1">Expressed in the late phase of the viral replicative cycle.</text>
</comment>
<comment type="similarity">
    <text evidence="1">Belongs to the T4likevirus baseplate wedge protein gp6 family.</text>
</comment>
<gene>
    <name type="primary">6</name>
</gene>
<protein>
    <recommendedName>
        <fullName evidence="1 7">Baseplate wedge protein gp6</fullName>
    </recommendedName>
    <alternativeName>
        <fullName>Gene product 6</fullName>
        <shortName>gp6</shortName>
    </alternativeName>
</protein>
<feature type="chain" id="PRO_0000164996" description="Baseplate wedge protein gp6">
    <location>
        <begin position="1"/>
        <end position="660"/>
    </location>
</feature>
<feature type="helix" evidence="13">
    <location>
        <begin position="342"/>
        <end position="352"/>
    </location>
</feature>
<feature type="turn" evidence="13">
    <location>
        <begin position="353"/>
        <end position="355"/>
    </location>
</feature>
<feature type="strand" evidence="13">
    <location>
        <begin position="359"/>
        <end position="364"/>
    </location>
</feature>
<feature type="strand" evidence="13">
    <location>
        <begin position="371"/>
        <end position="377"/>
    </location>
</feature>
<feature type="strand" evidence="13">
    <location>
        <begin position="379"/>
        <end position="382"/>
    </location>
</feature>
<feature type="turn" evidence="13">
    <location>
        <begin position="384"/>
        <end position="388"/>
    </location>
</feature>
<feature type="strand" evidence="13">
    <location>
        <begin position="389"/>
        <end position="391"/>
    </location>
</feature>
<feature type="helix" evidence="13">
    <location>
        <begin position="393"/>
        <end position="396"/>
    </location>
</feature>
<feature type="strand" evidence="13">
    <location>
        <begin position="403"/>
        <end position="409"/>
    </location>
</feature>
<feature type="strand" evidence="13">
    <location>
        <begin position="412"/>
        <end position="425"/>
    </location>
</feature>
<feature type="turn" evidence="13">
    <location>
        <begin position="426"/>
        <end position="428"/>
    </location>
</feature>
<feature type="helix" evidence="13">
    <location>
        <begin position="433"/>
        <end position="451"/>
    </location>
</feature>
<feature type="helix" evidence="13">
    <location>
        <begin position="461"/>
        <end position="469"/>
    </location>
</feature>
<feature type="strand" evidence="13">
    <location>
        <begin position="477"/>
        <end position="479"/>
    </location>
</feature>
<feature type="strand" evidence="13">
    <location>
        <begin position="482"/>
        <end position="489"/>
    </location>
</feature>
<feature type="strand" evidence="13">
    <location>
        <begin position="515"/>
        <end position="518"/>
    </location>
</feature>
<feature type="strand" evidence="13">
    <location>
        <begin position="535"/>
        <end position="542"/>
    </location>
</feature>
<feature type="strand" evidence="13">
    <location>
        <begin position="549"/>
        <end position="556"/>
    </location>
</feature>
<feature type="turn" evidence="13">
    <location>
        <begin position="560"/>
        <end position="562"/>
    </location>
</feature>
<feature type="strand" evidence="13">
    <location>
        <begin position="590"/>
        <end position="596"/>
    </location>
</feature>
<feature type="turn" evidence="13">
    <location>
        <begin position="597"/>
        <end position="600"/>
    </location>
</feature>
<feature type="strand" evidence="13">
    <location>
        <begin position="601"/>
        <end position="605"/>
    </location>
</feature>
<feature type="helix" evidence="13">
    <location>
        <begin position="606"/>
        <end position="608"/>
    </location>
</feature>
<feature type="helix" evidence="13">
    <location>
        <begin position="613"/>
        <end position="615"/>
    </location>
</feature>
<feature type="strand" evidence="13">
    <location>
        <begin position="621"/>
        <end position="625"/>
    </location>
</feature>
<feature type="strand" evidence="13">
    <location>
        <begin position="630"/>
        <end position="633"/>
    </location>
</feature>
<feature type="strand" evidence="13">
    <location>
        <begin position="636"/>
        <end position="640"/>
    </location>
</feature>
<feature type="turn" evidence="13">
    <location>
        <begin position="644"/>
        <end position="646"/>
    </location>
</feature>
<feature type="strand" evidence="13">
    <location>
        <begin position="650"/>
        <end position="653"/>
    </location>
</feature>
<proteinExistence type="evidence at protein level"/>
<reference key="1">
    <citation type="journal article" date="1990" name="Nucleic Acids Res.">
        <title>Nucleotide sequences of bacteriophage T4 genes 6, 7 and 8.</title>
        <authorList>
            <person name="Efimov V.P."/>
            <person name="Prilipov A.G."/>
            <person name="Mesyanzhinov V.V."/>
        </authorList>
    </citation>
    <scope>NUCLEOTIDE SEQUENCE [GENOMIC DNA]</scope>
    <source>
        <strain>D</strain>
    </source>
</reference>
<reference key="2">
    <citation type="journal article" date="2003" name="Microbiol. Mol. Biol. Rev.">
        <title>Bacteriophage T4 genome.</title>
        <authorList>
            <person name="Miller E.S."/>
            <person name="Kutter E."/>
            <person name="Mosig G."/>
            <person name="Arisaka F."/>
            <person name="Kunisawa T."/>
            <person name="Ruger W."/>
        </authorList>
    </citation>
    <scope>NUCLEOTIDE SEQUENCE [LARGE SCALE GENOMIC DNA]</scope>
</reference>
<reference key="3">
    <citation type="journal article" date="1990" name="J. Virol.">
        <title>Structure of the bacteriophage T4 baseplate as determined by chemical cross-linking.</title>
        <authorList>
            <person name="Watts N.R."/>
            <person name="Coombs D.H."/>
        </authorList>
    </citation>
    <scope>SUBCELLULAR LOCATION</scope>
    <scope>SUBUNIT</scope>
</reference>
<reference key="4">
    <citation type="journal article" date="2003" name="Cell. Mol. Life Sci.">
        <title>Structure and morphogenesis of bacteriophage T4.</title>
        <authorList>
            <person name="Leiman P.G."/>
            <person name="Kanamaru S."/>
            <person name="Mesyanzhinov V.V."/>
            <person name="Arisaka F."/>
            <person name="Rossmann M.G."/>
        </authorList>
    </citation>
    <scope>REVIEW</scope>
</reference>
<reference key="5">
    <citation type="journal article" date="2010" name="Virol. J.">
        <title>Morphogenesis of the T4 tail and tail fibers.</title>
        <authorList>
            <person name="Leiman P.G."/>
            <person name="Arisaka F."/>
            <person name="van Raaij M.J."/>
            <person name="Kostyuchenko V.A."/>
            <person name="Aksyuk A.A."/>
            <person name="Kanamaru S."/>
            <person name="Rossmann M.G."/>
        </authorList>
    </citation>
    <scope>REVIEW ON FUNCTION</scope>
</reference>
<reference key="6">
    <citation type="journal article" date="2010" name="J. Mol. Biol.">
        <title>The baseplate wedges of bacteriophage T4 spontaneously assemble into hubless baseplate-like structure in vitro.</title>
        <authorList>
            <person name="Yap M.L."/>
            <person name="Mio K."/>
            <person name="Leiman P.G."/>
            <person name="Kanamaru S."/>
            <person name="Arisaka F."/>
        </authorList>
    </citation>
    <scope>SUBUNIT</scope>
</reference>
<reference key="7">
    <citation type="journal article" date="2004" name="Cell">
        <title>Three-dimensional rearrangement of proteins in the tail of bacteriophage T4 on infection of its host.</title>
        <authorList>
            <person name="Leiman P.G."/>
            <person name="Chipman P.R."/>
            <person name="Kostyuchenko V.A."/>
            <person name="Mesyanzhinov V.V."/>
            <person name="Rossmann M.G."/>
        </authorList>
    </citation>
    <scope>STRUCTURE BY ELECTRON MICROSCOPY (17.0 ANGSTROMS) OF THE CONTRACTED TAIL</scope>
    <scope>SUBCELLULAR LOCATION</scope>
    <scope>FUNCTION</scope>
</reference>
<reference evidence="8 9 10" key="8">
    <citation type="journal article" date="2009" name="Structure">
        <title>The structure of gene product 6 of bacteriophage T4, the hinge-pin of the baseplate.</title>
        <authorList>
            <person name="Aksyuk A.A."/>
            <person name="Leiman P.G."/>
            <person name="Shneider M.M."/>
            <person name="Mesyanzhinov V.V."/>
            <person name="Rossmann M.G."/>
        </authorList>
    </citation>
    <scope>X-RAY CRYSTALLOGRAPHY (3.2 ANGSTROMS) OF 334-660</scope>
</reference>
<reference evidence="11 12" key="9">
    <citation type="journal article" date="2016" name="Nature">
        <title>Structure of the T4 baseplate and its function in triggering sheath contraction.</title>
        <authorList>
            <person name="Taylor N.M."/>
            <person name="Prokhorov N.S."/>
            <person name="Guerrero-Ferreira R.C."/>
            <person name="Shneider M.M."/>
            <person name="Browning C."/>
            <person name="Goldie K.N."/>
            <person name="Stahlberg H."/>
            <person name="Leiman P.G."/>
        </authorList>
    </citation>
    <scope>STRUCTURE BY ELECTRON MICROSCOPY (4.11 ANGSTROMS)</scope>
    <scope>SUBUNIT</scope>
    <scope>SUBCELLULAR LOCATION</scope>
    <scope>FUNCTION</scope>
    <scope>INTERACTION WITH GP7</scope>
</reference>